<dbReference type="EMBL" id="AF497524">
    <property type="protein sequence ID" value="AAM19329.1"/>
    <property type="molecule type" value="Genomic_DNA"/>
</dbReference>
<dbReference type="EMBL" id="AF497518">
    <property type="protein sequence ID" value="AAM19329.1"/>
    <property type="status" value="JOINED"/>
    <property type="molecule type" value="Genomic_DNA"/>
</dbReference>
<dbReference type="EMBL" id="AF497519">
    <property type="protein sequence ID" value="AAM19329.1"/>
    <property type="status" value="JOINED"/>
    <property type="molecule type" value="Genomic_DNA"/>
</dbReference>
<dbReference type="EMBL" id="AF497520">
    <property type="protein sequence ID" value="AAM19329.1"/>
    <property type="status" value="JOINED"/>
    <property type="molecule type" value="Genomic_DNA"/>
</dbReference>
<dbReference type="EMBL" id="AF497521">
    <property type="protein sequence ID" value="AAM19329.1"/>
    <property type="status" value="JOINED"/>
    <property type="molecule type" value="Genomic_DNA"/>
</dbReference>
<dbReference type="EMBL" id="AF497522">
    <property type="protein sequence ID" value="AAM19329.1"/>
    <property type="status" value="JOINED"/>
    <property type="molecule type" value="Genomic_DNA"/>
</dbReference>
<dbReference type="EMBL" id="AF497523">
    <property type="protein sequence ID" value="AAM19329.1"/>
    <property type="status" value="JOINED"/>
    <property type="molecule type" value="Genomic_DNA"/>
</dbReference>
<dbReference type="EMBL" id="BC118114">
    <property type="protein sequence ID" value="AAI18115.1"/>
    <property type="molecule type" value="mRNA"/>
</dbReference>
<dbReference type="PIR" id="B32905">
    <property type="entry name" value="B32905"/>
</dbReference>
<dbReference type="RefSeq" id="NP_001004024.1">
    <property type="nucleotide sequence ID" value="NM_001004024.3"/>
</dbReference>
<dbReference type="RefSeq" id="XP_005220741.1">
    <property type="nucleotide sequence ID" value="XM_005220684.4"/>
</dbReference>
<dbReference type="RefSeq" id="XP_010814523.1">
    <property type="nucleotide sequence ID" value="XM_010816221.4"/>
</dbReference>
<dbReference type="RefSeq" id="XP_010814524.1">
    <property type="nucleotide sequence ID" value="XM_010816222.3"/>
</dbReference>
<dbReference type="SMR" id="Q8SPJ1"/>
<dbReference type="FunCoup" id="Q8SPJ1">
    <property type="interactions" value="568"/>
</dbReference>
<dbReference type="STRING" id="9913.ENSBTAP00000023522"/>
<dbReference type="GlyCosmos" id="Q8SPJ1">
    <property type="glycosylation" value="1 site, No reported glycans"/>
</dbReference>
<dbReference type="GlyGen" id="Q8SPJ1">
    <property type="glycosylation" value="1 site"/>
</dbReference>
<dbReference type="iPTMnet" id="Q8SPJ1"/>
<dbReference type="PaxDb" id="9913-ENSBTAP00000023522"/>
<dbReference type="PeptideAtlas" id="Q8SPJ1"/>
<dbReference type="Ensembl" id="ENSBTAT00000023522.7">
    <property type="protein sequence ID" value="ENSBTAP00000023522.5"/>
    <property type="gene ID" value="ENSBTAG00000017685.7"/>
</dbReference>
<dbReference type="GeneID" id="445543"/>
<dbReference type="KEGG" id="bta:445543"/>
<dbReference type="CTD" id="3728"/>
<dbReference type="VEuPathDB" id="HostDB:ENSBTAG00000017685"/>
<dbReference type="VGNC" id="VGNC:30388">
    <property type="gene designation" value="JUP"/>
</dbReference>
<dbReference type="eggNOG" id="KOG4203">
    <property type="taxonomic scope" value="Eukaryota"/>
</dbReference>
<dbReference type="GeneTree" id="ENSGT00940000156395"/>
<dbReference type="HOGENOM" id="CLU_008757_1_1_1"/>
<dbReference type="InParanoid" id="Q8SPJ1"/>
<dbReference type="OMA" id="DETCGRQ"/>
<dbReference type="OrthoDB" id="195736at2759"/>
<dbReference type="TreeFam" id="TF317997"/>
<dbReference type="Reactome" id="R-BTA-418990">
    <property type="pathway name" value="Adherens junctions interactions"/>
</dbReference>
<dbReference type="Reactome" id="R-BTA-5218920">
    <property type="pathway name" value="VEGFR2 mediated vascular permeability"/>
</dbReference>
<dbReference type="Reactome" id="R-BTA-6798695">
    <property type="pathway name" value="Neutrophil degranulation"/>
</dbReference>
<dbReference type="Reactome" id="R-BTA-6805567">
    <property type="pathway name" value="Keratinization"/>
</dbReference>
<dbReference type="Reactome" id="R-BTA-6809371">
    <property type="pathway name" value="Formation of the cornified envelope"/>
</dbReference>
<dbReference type="Reactome" id="R-BTA-8980692">
    <property type="pathway name" value="RHOA GTPase cycle"/>
</dbReference>
<dbReference type="Reactome" id="R-BTA-9013106">
    <property type="pathway name" value="RHOC GTPase cycle"/>
</dbReference>
<dbReference type="Reactome" id="R-BTA-9013406">
    <property type="pathway name" value="RHOQ GTPase cycle"/>
</dbReference>
<dbReference type="Reactome" id="R-BTA-9013407">
    <property type="pathway name" value="RHOH GTPase cycle"/>
</dbReference>
<dbReference type="Reactome" id="R-BTA-9762292">
    <property type="pathway name" value="Regulation of CDH11 function"/>
</dbReference>
<dbReference type="Proteomes" id="UP000009136">
    <property type="component" value="Chromosome 19"/>
</dbReference>
<dbReference type="Bgee" id="ENSBTAG00000017685">
    <property type="expression patterns" value="Expressed in esophagus and 103 other cell types or tissues"/>
</dbReference>
<dbReference type="GO" id="GO:0005912">
    <property type="term" value="C:adherens junction"/>
    <property type="evidence" value="ECO:0000250"/>
    <property type="project" value="AgBase"/>
</dbReference>
<dbReference type="GO" id="GO:0016342">
    <property type="term" value="C:catenin complex"/>
    <property type="evidence" value="ECO:0000318"/>
    <property type="project" value="GO_Central"/>
</dbReference>
<dbReference type="GO" id="GO:0001533">
    <property type="term" value="C:cornified envelope"/>
    <property type="evidence" value="ECO:0007669"/>
    <property type="project" value="Ensembl"/>
</dbReference>
<dbReference type="GO" id="GO:0005737">
    <property type="term" value="C:cytoplasm"/>
    <property type="evidence" value="ECO:0000318"/>
    <property type="project" value="GO_Central"/>
</dbReference>
<dbReference type="GO" id="GO:0009898">
    <property type="term" value="C:cytoplasmic side of plasma membrane"/>
    <property type="evidence" value="ECO:0000314"/>
    <property type="project" value="BHF-UCL"/>
</dbReference>
<dbReference type="GO" id="GO:0005856">
    <property type="term" value="C:cytoskeleton"/>
    <property type="evidence" value="ECO:0000314"/>
    <property type="project" value="BHF-UCL"/>
</dbReference>
<dbReference type="GO" id="GO:0005829">
    <property type="term" value="C:cytosol"/>
    <property type="evidence" value="ECO:0000314"/>
    <property type="project" value="BHF-UCL"/>
</dbReference>
<dbReference type="GO" id="GO:0030057">
    <property type="term" value="C:desmosome"/>
    <property type="evidence" value="ECO:0000314"/>
    <property type="project" value="BHF-UCL"/>
</dbReference>
<dbReference type="GO" id="GO:0071665">
    <property type="term" value="C:gamma-catenin-TCF7L2 complex"/>
    <property type="evidence" value="ECO:0007669"/>
    <property type="project" value="Ensembl"/>
</dbReference>
<dbReference type="GO" id="GO:0014704">
    <property type="term" value="C:intercalated disc"/>
    <property type="evidence" value="ECO:0007669"/>
    <property type="project" value="Ensembl"/>
</dbReference>
<dbReference type="GO" id="GO:0005882">
    <property type="term" value="C:intermediate filament"/>
    <property type="evidence" value="ECO:0007669"/>
    <property type="project" value="Ensembl"/>
</dbReference>
<dbReference type="GO" id="GO:0005634">
    <property type="term" value="C:nucleus"/>
    <property type="evidence" value="ECO:0000318"/>
    <property type="project" value="GO_Central"/>
</dbReference>
<dbReference type="GO" id="GO:0032993">
    <property type="term" value="C:protein-DNA complex"/>
    <property type="evidence" value="ECO:0007669"/>
    <property type="project" value="Ensembl"/>
</dbReference>
<dbReference type="GO" id="GO:0030018">
    <property type="term" value="C:Z disc"/>
    <property type="evidence" value="ECO:0007669"/>
    <property type="project" value="Ensembl"/>
</dbReference>
<dbReference type="GO" id="GO:0005915">
    <property type="term" value="C:zonula adherens"/>
    <property type="evidence" value="ECO:0000314"/>
    <property type="project" value="BHF-UCL"/>
</dbReference>
<dbReference type="GO" id="GO:0045294">
    <property type="term" value="F:alpha-catenin binding"/>
    <property type="evidence" value="ECO:0000318"/>
    <property type="project" value="GO_Central"/>
</dbReference>
<dbReference type="GO" id="GO:0045296">
    <property type="term" value="F:cadherin binding"/>
    <property type="evidence" value="ECO:0000318"/>
    <property type="project" value="GO_Central"/>
</dbReference>
<dbReference type="GO" id="GO:0106006">
    <property type="term" value="F:cytoskeletal protein-membrane anchor activity"/>
    <property type="evidence" value="ECO:0007669"/>
    <property type="project" value="Ensembl"/>
</dbReference>
<dbReference type="GO" id="GO:0016922">
    <property type="term" value="F:nuclear receptor binding"/>
    <property type="evidence" value="ECO:0000318"/>
    <property type="project" value="GO_Central"/>
</dbReference>
<dbReference type="GO" id="GO:0042803">
    <property type="term" value="F:protein homodimerization activity"/>
    <property type="evidence" value="ECO:0000353"/>
    <property type="project" value="BHF-UCL"/>
</dbReference>
<dbReference type="GO" id="GO:0019903">
    <property type="term" value="F:protein phosphatase binding"/>
    <property type="evidence" value="ECO:0000318"/>
    <property type="project" value="GO_Central"/>
</dbReference>
<dbReference type="GO" id="GO:0003713">
    <property type="term" value="F:transcription coactivator activity"/>
    <property type="evidence" value="ECO:0000318"/>
    <property type="project" value="GO_Central"/>
</dbReference>
<dbReference type="GO" id="GO:0086073">
    <property type="term" value="P:bundle of His cell-Purkinje myocyte adhesion involved in cell communication"/>
    <property type="evidence" value="ECO:0007669"/>
    <property type="project" value="Ensembl"/>
</dbReference>
<dbReference type="GO" id="GO:0060070">
    <property type="term" value="P:canonical Wnt signaling pathway"/>
    <property type="evidence" value="ECO:0000318"/>
    <property type="project" value="GO_Central"/>
</dbReference>
<dbReference type="GO" id="GO:0016477">
    <property type="term" value="P:cell migration"/>
    <property type="evidence" value="ECO:0007669"/>
    <property type="project" value="Ensembl"/>
</dbReference>
<dbReference type="GO" id="GO:0098609">
    <property type="term" value="P:cell-cell adhesion"/>
    <property type="evidence" value="ECO:0000318"/>
    <property type="project" value="GO_Central"/>
</dbReference>
<dbReference type="GO" id="GO:0071681">
    <property type="term" value="P:cellular response to indole-3-methanol"/>
    <property type="evidence" value="ECO:0007669"/>
    <property type="project" value="Ensembl"/>
</dbReference>
<dbReference type="GO" id="GO:0002159">
    <property type="term" value="P:desmosome assembly"/>
    <property type="evidence" value="ECO:0007669"/>
    <property type="project" value="Ensembl"/>
</dbReference>
<dbReference type="GO" id="GO:0050982">
    <property type="term" value="P:detection of mechanical stimulus"/>
    <property type="evidence" value="ECO:0007669"/>
    <property type="project" value="Ensembl"/>
</dbReference>
<dbReference type="GO" id="GO:0071603">
    <property type="term" value="P:endothelial cell-cell adhesion"/>
    <property type="evidence" value="ECO:0000314"/>
    <property type="project" value="BHF-UCL"/>
</dbReference>
<dbReference type="GO" id="GO:0043537">
    <property type="term" value="P:negative regulation of blood vessel endothelial cell migration"/>
    <property type="evidence" value="ECO:0007669"/>
    <property type="project" value="Ensembl"/>
</dbReference>
<dbReference type="GO" id="GO:0045766">
    <property type="term" value="P:positive regulation of angiogenesis"/>
    <property type="evidence" value="ECO:0007669"/>
    <property type="project" value="Ensembl"/>
</dbReference>
<dbReference type="GO" id="GO:0001954">
    <property type="term" value="P:positive regulation of cell-matrix adhesion"/>
    <property type="evidence" value="ECO:0007669"/>
    <property type="project" value="Ensembl"/>
</dbReference>
<dbReference type="GO" id="GO:0042307">
    <property type="term" value="P:positive regulation of protein import into nucleus"/>
    <property type="evidence" value="ECO:0007669"/>
    <property type="project" value="Ensembl"/>
</dbReference>
<dbReference type="GO" id="GO:0045944">
    <property type="term" value="P:positive regulation of transcription by RNA polymerase II"/>
    <property type="evidence" value="ECO:0000318"/>
    <property type="project" value="GO_Central"/>
</dbReference>
<dbReference type="GO" id="GO:0072659">
    <property type="term" value="P:protein localization to plasma membrane"/>
    <property type="evidence" value="ECO:0007669"/>
    <property type="project" value="Ensembl"/>
</dbReference>
<dbReference type="GO" id="GO:0042127">
    <property type="term" value="P:regulation of cell population proliferation"/>
    <property type="evidence" value="ECO:0007669"/>
    <property type="project" value="Ensembl"/>
</dbReference>
<dbReference type="GO" id="GO:0086091">
    <property type="term" value="P:regulation of heart rate by cardiac conduction"/>
    <property type="evidence" value="ECO:0007669"/>
    <property type="project" value="Ensembl"/>
</dbReference>
<dbReference type="GO" id="GO:0098911">
    <property type="term" value="P:regulation of ventricular cardiac muscle cell action potential"/>
    <property type="evidence" value="ECO:0007669"/>
    <property type="project" value="Ensembl"/>
</dbReference>
<dbReference type="GO" id="GO:0043588">
    <property type="term" value="P:skin development"/>
    <property type="evidence" value="ECO:0007669"/>
    <property type="project" value="Ensembl"/>
</dbReference>
<dbReference type="FunFam" id="1.25.10.10:FF:000015">
    <property type="entry name" value="Catenin beta-1"/>
    <property type="match status" value="1"/>
</dbReference>
<dbReference type="Gene3D" id="1.25.10.10">
    <property type="entry name" value="Leucine-rich Repeat Variant"/>
    <property type="match status" value="1"/>
</dbReference>
<dbReference type="InterPro" id="IPR011989">
    <property type="entry name" value="ARM-like"/>
</dbReference>
<dbReference type="InterPro" id="IPR016024">
    <property type="entry name" value="ARM-type_fold"/>
</dbReference>
<dbReference type="InterPro" id="IPR000225">
    <property type="entry name" value="Armadillo"/>
</dbReference>
<dbReference type="InterPro" id="IPR013284">
    <property type="entry name" value="Beta-catenin"/>
</dbReference>
<dbReference type="PANTHER" id="PTHR45976">
    <property type="entry name" value="ARMADILLO SEGMENT POLARITY PROTEIN"/>
    <property type="match status" value="1"/>
</dbReference>
<dbReference type="Pfam" id="PF00514">
    <property type="entry name" value="Arm"/>
    <property type="match status" value="3"/>
</dbReference>
<dbReference type="PRINTS" id="PR01869">
    <property type="entry name" value="BCATNINFAMLY"/>
</dbReference>
<dbReference type="SMART" id="SM00185">
    <property type="entry name" value="ARM"/>
    <property type="match status" value="12"/>
</dbReference>
<dbReference type="SUPFAM" id="SSF48371">
    <property type="entry name" value="ARM repeat"/>
    <property type="match status" value="1"/>
</dbReference>
<dbReference type="PROSITE" id="PS50176">
    <property type="entry name" value="ARM_REPEAT"/>
    <property type="match status" value="9"/>
</dbReference>
<accession>Q8SPJ1</accession>
<accession>Q17QY6</accession>
<name>PLAK_BOVIN</name>
<keyword id="KW-0007">Acetylation</keyword>
<keyword id="KW-0130">Cell adhesion</keyword>
<keyword id="KW-0965">Cell junction</keyword>
<keyword id="KW-1003">Cell membrane</keyword>
<keyword id="KW-0963">Cytoplasm</keyword>
<keyword id="KW-0206">Cytoskeleton</keyword>
<keyword id="KW-0325">Glycoprotein</keyword>
<keyword id="KW-0472">Membrane</keyword>
<keyword id="KW-0539">Nucleus</keyword>
<keyword id="KW-0597">Phosphoprotein</keyword>
<keyword id="KW-1185">Reference proteome</keyword>
<keyword id="KW-0677">Repeat</keyword>
<protein>
    <recommendedName>
        <fullName>Junction plakoglobin</fullName>
    </recommendedName>
    <alternativeName>
        <fullName>Desmoplakin III</fullName>
    </alternativeName>
    <alternativeName>
        <fullName>Desmoplakin-3</fullName>
    </alternativeName>
</protein>
<reference evidence="6" key="1">
    <citation type="submission" date="2002-04" db="EMBL/GenBank/DDBJ databases">
        <title>Role of plakoglobin in bovine cardiomyopathy with woolly haircoat syndrome.</title>
        <authorList>
            <person name="Simpson M.A."/>
            <person name="Crosby A.H."/>
        </authorList>
    </citation>
    <scope>NUCLEOTIDE SEQUENCE [GENOMIC DNA]</scope>
</reference>
<reference evidence="6" key="2">
    <citation type="submission" date="2006-06" db="EMBL/GenBank/DDBJ databases">
        <authorList>
            <consortium name="NIH - Mammalian Gene Collection (MGC) project"/>
        </authorList>
    </citation>
    <scope>NUCLEOTIDE SEQUENCE [LARGE SCALE MRNA]</scope>
    <source>
        <strain>Hereford</strain>
        <tissue>Uterus</tissue>
    </source>
</reference>
<feature type="chain" id="PRO_0000064277" description="Junction plakoglobin">
    <location>
        <begin position="1"/>
        <end position="745"/>
    </location>
</feature>
<feature type="repeat" description="ARM 1" evidence="4">
    <location>
        <begin position="132"/>
        <end position="171"/>
    </location>
</feature>
<feature type="repeat" description="ARM 2">
    <location>
        <begin position="172"/>
        <end position="215"/>
    </location>
</feature>
<feature type="repeat" description="ARM 3">
    <location>
        <begin position="216"/>
        <end position="255"/>
    </location>
</feature>
<feature type="repeat" description="ARM 4">
    <location>
        <begin position="258"/>
        <end position="297"/>
    </location>
</feature>
<feature type="repeat" description="ARM 5">
    <location>
        <begin position="298"/>
        <end position="341"/>
    </location>
</feature>
<feature type="repeat" description="ARM 6">
    <location>
        <begin position="342"/>
        <end position="381"/>
    </location>
</feature>
<feature type="repeat" description="ARM 7">
    <location>
        <begin position="383"/>
        <end position="420"/>
    </location>
</feature>
<feature type="repeat" description="ARM 8">
    <location>
        <begin position="423"/>
        <end position="464"/>
    </location>
</feature>
<feature type="repeat" description="ARM 9">
    <location>
        <begin position="470"/>
        <end position="510"/>
    </location>
</feature>
<feature type="repeat" description="ARM 10">
    <location>
        <begin position="512"/>
        <end position="551"/>
    </location>
</feature>
<feature type="repeat" description="ARM 11">
    <location>
        <begin position="574"/>
        <end position="613"/>
    </location>
</feature>
<feature type="repeat" description="ARM 12">
    <location>
        <begin position="615"/>
        <end position="661"/>
    </location>
</feature>
<feature type="region of interest" description="Interaction with DSC1 and DSG1" evidence="1">
    <location>
        <begin position="132"/>
        <end position="297"/>
    </location>
</feature>
<feature type="region of interest" description="Interaction with DSC1" evidence="1">
    <location>
        <begin position="574"/>
        <end position="661"/>
    </location>
</feature>
<feature type="modified residue" description="N-acetylmethionine" evidence="2">
    <location>
        <position position="1"/>
    </location>
</feature>
<feature type="modified residue" description="Phosphoserine" evidence="2">
    <location>
        <position position="99"/>
    </location>
</feature>
<feature type="modified residue" description="Phosphoserine" evidence="2">
    <location>
        <position position="125"/>
    </location>
</feature>
<feature type="modified residue" description="Phosphoserine" evidence="2">
    <location>
        <position position="182"/>
    </location>
</feature>
<feature type="modified residue" description="Phosphoserine" evidence="2">
    <location>
        <position position="665"/>
    </location>
</feature>
<feature type="modified residue" description="Phosphoserine" evidence="2">
    <location>
        <position position="730"/>
    </location>
</feature>
<feature type="glycosylation site" description="O-linked (GlcNAc) threonine" evidence="1">
    <location>
        <position position="14"/>
    </location>
</feature>
<feature type="sequence conflict" description="In Ref. 2; AAI18115." evidence="5" ref="2">
    <original>G</original>
    <variation>S</variation>
    <location>
        <position position="92"/>
    </location>
</feature>
<proteinExistence type="evidence at transcript level"/>
<comment type="function">
    <text evidence="1">Common junctional plaque protein. The membrane-associated plaques are architectural elements in an important strategic position to influence the arrangement and function of both the cytoskeleton and the cells within the tissue. The presence of plakoglobin in both the desmosomes and in the intermediate junctions suggests that it plays a central role in the structure and function of submembranous plaques. Acts as a substrate for VE-PTP and is required by it to stimulate VE-cadherin function in endothelial cells. Can replace beta-catenin in E-cadherin/catenin adhesion complexes which are proposed to couple cadherins to the actin cytoskeleton (By similarity).</text>
</comment>
<comment type="subunit">
    <text evidence="1 2">Homodimer. Component of an E-cadherin/catenin adhesion complex composed of at least E-cadherin/CDH1 and gamma-catenin/JUP, and possibly alpha-catenin/CTNNA1; the complex is located to adherens junctions. The stable association of CTNNA1 is controversial as CTNNA1 was shown not to bind to F-actin when assembled in the complex. Interacts with MUC1. Interacts with CAV1. Interacts with PTPRJ. Interacts with DSG1. Interacts with DSC1 and DSC2. Interacts with PKP2 (By similarity). Interacts with PKP3 (via N-terminus); the interaction is required for PKP3 localization to desmosome cell-cell junctions (By similarity). Interacts with DSG4 (By similarity).</text>
</comment>
<comment type="subcellular location">
    <subcellularLocation>
        <location evidence="2">Cell junction</location>
        <location evidence="2">Adherens junction</location>
    </subcellularLocation>
    <subcellularLocation>
        <location evidence="2">Cell junction</location>
        <location evidence="2">Desmosome</location>
    </subcellularLocation>
    <subcellularLocation>
        <location evidence="2">Cytoplasm</location>
        <location evidence="2">Cytoskeleton</location>
    </subcellularLocation>
    <subcellularLocation>
        <location evidence="2">Cell membrane</location>
        <topology evidence="2">Peripheral membrane protein</topology>
    </subcellularLocation>
    <subcellularLocation>
        <location evidence="3">Cytoplasm</location>
    </subcellularLocation>
    <subcellularLocation>
        <location evidence="3">Cell junction</location>
    </subcellularLocation>
    <subcellularLocation>
        <location evidence="3">Nucleus</location>
    </subcellularLocation>
    <text evidence="2">Cytoplasmic in a soluble and membrane-associated form. Colocalizes with DSG4 at desmosomes (By similarity).</text>
</comment>
<comment type="domain">
    <text evidence="1">The entire ARM repeats region mediates binding to CDH1/E-cadherin. The N-terminus and first three ARM repeats are sufficient for binding to DSG1. The N-terminus and first ARM repeat are sufficient for association with CTNNA1. DSC1 association requires both ends of the ARM repeat region (By similarity).</text>
</comment>
<comment type="PTM">
    <text evidence="1">May be phosphorylated by FER.</text>
</comment>
<comment type="similarity">
    <text evidence="5">Belongs to the beta-catenin family.</text>
</comment>
<gene>
    <name evidence="6" type="primary">JUP</name>
</gene>
<sequence length="745" mass="81821">MEVMNLIEQPIKVTEWQQTYTYDSGIHSGANTCVPSLSSKGLIEEDEACGRQYTLKKTTTYTQSVPPGQGDLEYQMSTTARAKRVREAMCPGVTGEDSSLLLTTQVEGQTTNLQRLAEPSQLLKSAIVHLINYQDDAELATRALPELTKLLNDEDPVVVTKAAMIVNQLSKKEASRRALMGSPQLVAAVVRTMQNTSDLDTARCTTSILHNLSHHREGLLAIFKSGGIPALVRMLSSPVESVLFYAITTLHNLLLYQEGAKMAVRLADGLQKMVPLLNKNNPKFLAITTDCLQLLAYGNQESKLIILANGGPQALVQIMRNYSYEKLLWTTSRVLKVLSVCPSNKPAIVEAGGMQALGKHLTSNSPRLVQNCLWTLRNLSDVATKQEGLESVLKILVNQLSVDDVNVLTCATGTLSNLTCNNSKNKTLVTQNSGVEALIHAILRAGDKDDITEPAVCALRHLTSRHPEAEMAQNSVRLNYGIPAIVKLLNQPNQWPLVKATIGLIRNLALCPANHAPLQEAAVIPRLVQLLVKAHQDAQRHVAAGTQQPYTDGVRMEEIVEGCTGALHILARDPMNRMEIFRLNTIPLFVQLLYSSVENIQRVAAGVLCELAQDKEAADAIDAEGASAPLMELLHSRNEGTATYAAAVLFRISEDKNPDYRKRVSVELTNSLFKHDPAAWEAAQSMIPMNEPYADDMDATYRPMYSSDVPMDPLEMHMDMDGDYPIDTYSDGLRPPYATADHMLA</sequence>
<organism>
    <name type="scientific">Bos taurus</name>
    <name type="common">Bovine</name>
    <dbReference type="NCBI Taxonomy" id="9913"/>
    <lineage>
        <taxon>Eukaryota</taxon>
        <taxon>Metazoa</taxon>
        <taxon>Chordata</taxon>
        <taxon>Craniata</taxon>
        <taxon>Vertebrata</taxon>
        <taxon>Euteleostomi</taxon>
        <taxon>Mammalia</taxon>
        <taxon>Eutheria</taxon>
        <taxon>Laurasiatheria</taxon>
        <taxon>Artiodactyla</taxon>
        <taxon>Ruminantia</taxon>
        <taxon>Pecora</taxon>
        <taxon>Bovidae</taxon>
        <taxon>Bovinae</taxon>
        <taxon>Bos</taxon>
    </lineage>
</organism>
<evidence type="ECO:0000250" key="1"/>
<evidence type="ECO:0000250" key="2">
    <source>
        <dbReference type="UniProtKB" id="P14923"/>
    </source>
</evidence>
<evidence type="ECO:0000250" key="3">
    <source>
        <dbReference type="UniProtKB" id="Q9PVF7"/>
    </source>
</evidence>
<evidence type="ECO:0000255" key="4"/>
<evidence type="ECO:0000305" key="5"/>
<evidence type="ECO:0000312" key="6">
    <source>
        <dbReference type="EMBL" id="AAM19329.1"/>
    </source>
</evidence>